<accession>B3CLK2</accession>
<gene>
    <name evidence="1" type="primary">rplT</name>
    <name type="ordered locus">WP0662</name>
</gene>
<reference key="1">
    <citation type="journal article" date="2008" name="Mol. Biol. Evol.">
        <title>Genome evolution of Wolbachia strain wPip from the Culex pipiens group.</title>
        <authorList>
            <person name="Klasson L."/>
            <person name="Walker T."/>
            <person name="Sebaihia M."/>
            <person name="Sanders M.J."/>
            <person name="Quail M.A."/>
            <person name="Lord A."/>
            <person name="Sanders S."/>
            <person name="Earl J."/>
            <person name="O'Neill S.L."/>
            <person name="Thomson N."/>
            <person name="Sinkins S.P."/>
            <person name="Parkhill J."/>
        </authorList>
    </citation>
    <scope>NUCLEOTIDE SEQUENCE [LARGE SCALE GENOMIC DNA]</scope>
    <source>
        <strain>wPip</strain>
    </source>
</reference>
<keyword id="KW-0687">Ribonucleoprotein</keyword>
<keyword id="KW-0689">Ribosomal protein</keyword>
<keyword id="KW-0694">RNA-binding</keyword>
<keyword id="KW-0699">rRNA-binding</keyword>
<name>RL20_WOLPP</name>
<dbReference type="EMBL" id="AM999887">
    <property type="protein sequence ID" value="CAQ54770.1"/>
    <property type="molecule type" value="Genomic_DNA"/>
</dbReference>
<dbReference type="RefSeq" id="WP_007302081.1">
    <property type="nucleotide sequence ID" value="NC_010981.1"/>
</dbReference>
<dbReference type="SMR" id="B3CLK2"/>
<dbReference type="KEGG" id="wpi:WP0662"/>
<dbReference type="eggNOG" id="COG0292">
    <property type="taxonomic scope" value="Bacteria"/>
</dbReference>
<dbReference type="HOGENOM" id="CLU_123265_0_1_5"/>
<dbReference type="Proteomes" id="UP000008814">
    <property type="component" value="Chromosome"/>
</dbReference>
<dbReference type="GO" id="GO:1990904">
    <property type="term" value="C:ribonucleoprotein complex"/>
    <property type="evidence" value="ECO:0007669"/>
    <property type="project" value="UniProtKB-KW"/>
</dbReference>
<dbReference type="GO" id="GO:0005840">
    <property type="term" value="C:ribosome"/>
    <property type="evidence" value="ECO:0007669"/>
    <property type="project" value="UniProtKB-KW"/>
</dbReference>
<dbReference type="GO" id="GO:0019843">
    <property type="term" value="F:rRNA binding"/>
    <property type="evidence" value="ECO:0007669"/>
    <property type="project" value="UniProtKB-UniRule"/>
</dbReference>
<dbReference type="GO" id="GO:0003735">
    <property type="term" value="F:structural constituent of ribosome"/>
    <property type="evidence" value="ECO:0007669"/>
    <property type="project" value="InterPro"/>
</dbReference>
<dbReference type="GO" id="GO:0000027">
    <property type="term" value="P:ribosomal large subunit assembly"/>
    <property type="evidence" value="ECO:0007669"/>
    <property type="project" value="UniProtKB-UniRule"/>
</dbReference>
<dbReference type="GO" id="GO:0006412">
    <property type="term" value="P:translation"/>
    <property type="evidence" value="ECO:0007669"/>
    <property type="project" value="InterPro"/>
</dbReference>
<dbReference type="CDD" id="cd07026">
    <property type="entry name" value="Ribosomal_L20"/>
    <property type="match status" value="1"/>
</dbReference>
<dbReference type="FunFam" id="1.10.1900.20:FF:000001">
    <property type="entry name" value="50S ribosomal protein L20"/>
    <property type="match status" value="1"/>
</dbReference>
<dbReference type="Gene3D" id="6.10.160.10">
    <property type="match status" value="1"/>
</dbReference>
<dbReference type="Gene3D" id="1.10.1900.20">
    <property type="entry name" value="Ribosomal protein L20"/>
    <property type="match status" value="1"/>
</dbReference>
<dbReference type="HAMAP" id="MF_00382">
    <property type="entry name" value="Ribosomal_bL20"/>
    <property type="match status" value="1"/>
</dbReference>
<dbReference type="InterPro" id="IPR005813">
    <property type="entry name" value="Ribosomal_bL20"/>
</dbReference>
<dbReference type="InterPro" id="IPR049946">
    <property type="entry name" value="RIBOSOMAL_L20_CS"/>
</dbReference>
<dbReference type="InterPro" id="IPR035566">
    <property type="entry name" value="Ribosomal_protein_bL20_C"/>
</dbReference>
<dbReference type="NCBIfam" id="TIGR01032">
    <property type="entry name" value="rplT_bact"/>
    <property type="match status" value="1"/>
</dbReference>
<dbReference type="PANTHER" id="PTHR10986">
    <property type="entry name" value="39S RIBOSOMAL PROTEIN L20"/>
    <property type="match status" value="1"/>
</dbReference>
<dbReference type="Pfam" id="PF00453">
    <property type="entry name" value="Ribosomal_L20"/>
    <property type="match status" value="1"/>
</dbReference>
<dbReference type="PRINTS" id="PR00062">
    <property type="entry name" value="RIBOSOMALL20"/>
</dbReference>
<dbReference type="SUPFAM" id="SSF74731">
    <property type="entry name" value="Ribosomal protein L20"/>
    <property type="match status" value="1"/>
</dbReference>
<dbReference type="PROSITE" id="PS00937">
    <property type="entry name" value="RIBOSOMAL_L20"/>
    <property type="match status" value="1"/>
</dbReference>
<organism>
    <name type="scientific">Wolbachia pipientis subsp. Culex pipiens (strain wPip)</name>
    <dbReference type="NCBI Taxonomy" id="570417"/>
    <lineage>
        <taxon>Bacteria</taxon>
        <taxon>Pseudomonadati</taxon>
        <taxon>Pseudomonadota</taxon>
        <taxon>Alphaproteobacteria</taxon>
        <taxon>Rickettsiales</taxon>
        <taxon>Anaplasmataceae</taxon>
        <taxon>Wolbachieae</taxon>
        <taxon>Wolbachia</taxon>
    </lineage>
</organism>
<protein>
    <recommendedName>
        <fullName evidence="1">Large ribosomal subunit protein bL20</fullName>
    </recommendedName>
    <alternativeName>
        <fullName evidence="2">50S ribosomal protein L20</fullName>
    </alternativeName>
</protein>
<evidence type="ECO:0000255" key="1">
    <source>
        <dbReference type="HAMAP-Rule" id="MF_00382"/>
    </source>
</evidence>
<evidence type="ECO:0000305" key="2"/>
<proteinExistence type="inferred from homology"/>
<sequence>MARIKRGTATHARHKKVLKLAKGYRGRAKNCYRIALQRVEKALQYAYRDRRNRKRDFRGLWIIRINAAAREHGLTYGRFMHGLKLVGVDLNRKILAEMAVNHKDDFAKLIETVSSKLAENS</sequence>
<feature type="chain" id="PRO_1000122391" description="Large ribosomal subunit protein bL20">
    <location>
        <begin position="1"/>
        <end position="121"/>
    </location>
</feature>
<comment type="function">
    <text evidence="1">Binds directly to 23S ribosomal RNA and is necessary for the in vitro assembly process of the 50S ribosomal subunit. It is not involved in the protein synthesizing functions of that subunit.</text>
</comment>
<comment type="similarity">
    <text evidence="1">Belongs to the bacterial ribosomal protein bL20 family.</text>
</comment>